<proteinExistence type="evidence at protein level"/>
<reference key="1">
    <citation type="journal article" date="1993" name="Gene">
        <title>Cloning, sequencing and overexpression of cobA which encodes ATP:corrinoid adenosyltransferase in Salmonella typhimurium.</title>
        <authorList>
            <person name="Suh S.-J."/>
            <person name="Escalante-Semerena J.C."/>
        </authorList>
    </citation>
    <scope>NUCLEOTIDE SEQUENCE [GENOMIC DNA]</scope>
    <source>
        <strain>LT2</strain>
    </source>
</reference>
<reference key="2">
    <citation type="journal article" date="2001" name="Nature">
        <title>Complete genome sequence of Salmonella enterica serovar Typhimurium LT2.</title>
        <authorList>
            <person name="McClelland M."/>
            <person name="Sanderson K.E."/>
            <person name="Spieth J."/>
            <person name="Clifton S.W."/>
            <person name="Latreille P."/>
            <person name="Courtney L."/>
            <person name="Porwollik S."/>
            <person name="Ali J."/>
            <person name="Dante M."/>
            <person name="Du F."/>
            <person name="Hou S."/>
            <person name="Layman D."/>
            <person name="Leonard S."/>
            <person name="Nguyen C."/>
            <person name="Scott K."/>
            <person name="Holmes A."/>
            <person name="Grewal N."/>
            <person name="Mulvaney E."/>
            <person name="Ryan E."/>
            <person name="Sun H."/>
            <person name="Florea L."/>
            <person name="Miller W."/>
            <person name="Stoneking T."/>
            <person name="Nhan M."/>
            <person name="Waterston R."/>
            <person name="Wilson R.K."/>
        </authorList>
    </citation>
    <scope>NUCLEOTIDE SEQUENCE [LARGE SCALE GENOMIC DNA]</scope>
    <source>
        <strain>LT2 / SGSC1412 / ATCC 700720</strain>
    </source>
</reference>
<reference key="3">
    <citation type="journal article" date="1995" name="J. Bacteriol.">
        <title>Purification and initial characterization of the ATP:corrinoid adenosyltransferase encoded by the cobA gene of Salmonella typhimurium.</title>
        <authorList>
            <person name="Suh S.-J."/>
            <person name="Escalante-Semerena J.C."/>
        </authorList>
    </citation>
    <scope>PROTEIN SEQUENCE OF 1-21</scope>
    <scope>CHARACTERIZATION</scope>
</reference>
<reference key="4">
    <citation type="journal article" date="1990" name="J. Bacteriol.">
        <title>cobA function is required for both de novo cobalamin biosynthesis and assimilation of exogenous corrinoids in Salmonella typhimurium.</title>
        <authorList>
            <person name="Escalante-Semerena J.C."/>
            <person name="Suh S.-J."/>
            <person name="Roth J.R."/>
        </authorList>
    </citation>
    <scope>CHARACTERIZATION</scope>
</reference>
<reference key="5">
    <citation type="journal article" date="2001" name="J. Bacteriol.">
        <title>Functional genomic, biochemical, and genetic characterization of the Salmonella pduO gene, an ATP:cob(I)alamin adenosyltransferase gene.</title>
        <authorList>
            <person name="Johnson C.L."/>
            <person name="Pechonick E."/>
            <person name="Park S.D."/>
            <person name="Havemann G.D."/>
            <person name="Leal N.A."/>
            <person name="Bobik T.A."/>
        </authorList>
    </citation>
    <scope>DISRUPTION PHENOTYPE</scope>
    <source>
        <strain>LT2</strain>
    </source>
</reference>
<reference key="6">
    <citation type="journal article" date="2002" name="J. Biol. Chem.">
        <title>The ATP:Co(I)rrinoid adenosyltransferase (CobA) enzyme of Salmonella enterica requires the 2'-OH group of ATP for function and yields inorganic triphosphate as its reaction byproduct.</title>
        <authorList>
            <person name="Fonseca M.V."/>
            <person name="Buan N.R."/>
            <person name="Horswill A.R."/>
            <person name="Rayment I."/>
            <person name="Escalante-Semerena J.C."/>
        </authorList>
    </citation>
    <scope>CHARACTERIZATION</scope>
</reference>
<reference key="7">
    <citation type="journal article" date="2001" name="Biochemistry">
        <title>Three-dimensional structure of ATP:corrinoid adenosyltransferase from Salmonella typhimurium in its free state, complexed with MgATP, or complexed with hydroxycobalamin and MgATP.</title>
        <authorList>
            <person name="Bauer C.B."/>
            <person name="Fonseca M.V."/>
            <person name="Holden H.M."/>
            <person name="Thoden J.B."/>
            <person name="Thompson T.B."/>
            <person name="Escalante-Semerena J.C."/>
            <person name="Rayment I."/>
        </authorList>
    </citation>
    <scope>X-RAY CRYSTALLOGRAPHY (1.8 ANGSTROMS) OF 27-183</scope>
</reference>
<dbReference type="EC" id="2.5.1.17"/>
<dbReference type="EMBL" id="L08890">
    <property type="protein sequence ID" value="AAA71929.1"/>
    <property type="molecule type" value="Unassigned_DNA"/>
</dbReference>
<dbReference type="EMBL" id="AE006468">
    <property type="protein sequence ID" value="AAL20636.1"/>
    <property type="molecule type" value="Genomic_DNA"/>
</dbReference>
<dbReference type="PIR" id="JN0721">
    <property type="entry name" value="JN0721"/>
</dbReference>
<dbReference type="RefSeq" id="NP_460677.1">
    <property type="nucleotide sequence ID" value="NC_003197.2"/>
</dbReference>
<dbReference type="PDB" id="1G5R">
    <property type="method" value="X-ray"/>
    <property type="resolution" value="2.10 A"/>
    <property type="chains" value="A=1-196"/>
</dbReference>
<dbReference type="PDB" id="1G5T">
    <property type="method" value="X-ray"/>
    <property type="resolution" value="1.80 A"/>
    <property type="chains" value="A=1-196"/>
</dbReference>
<dbReference type="PDB" id="1G64">
    <property type="method" value="X-ray"/>
    <property type="resolution" value="2.10 A"/>
    <property type="chains" value="A/B=1-196"/>
</dbReference>
<dbReference type="PDB" id="4HUT">
    <property type="method" value="X-ray"/>
    <property type="resolution" value="1.95 A"/>
    <property type="chains" value="A/B=6-196"/>
</dbReference>
<dbReference type="PDBsum" id="1G5R"/>
<dbReference type="PDBsum" id="1G5T"/>
<dbReference type="PDBsum" id="1G64"/>
<dbReference type="PDBsum" id="4HUT"/>
<dbReference type="SMR" id="P31570"/>
<dbReference type="STRING" id="99287.STM1718"/>
<dbReference type="PaxDb" id="99287-STM1718"/>
<dbReference type="GeneID" id="1253237"/>
<dbReference type="KEGG" id="stm:STM1718"/>
<dbReference type="PATRIC" id="fig|99287.12.peg.1815"/>
<dbReference type="HOGENOM" id="CLU_088595_0_0_6"/>
<dbReference type="OMA" id="HAMGEGF"/>
<dbReference type="PhylomeDB" id="P31570"/>
<dbReference type="BioCyc" id="MetaCyc:MONOMER-13220"/>
<dbReference type="BioCyc" id="SENT99287:STM1718-MONOMER"/>
<dbReference type="BRENDA" id="2.5.1.17">
    <property type="organism ID" value="2169"/>
</dbReference>
<dbReference type="UniPathway" id="UPA00148">
    <property type="reaction ID" value="UER00233"/>
</dbReference>
<dbReference type="EvolutionaryTrace" id="P31570"/>
<dbReference type="Proteomes" id="UP000001014">
    <property type="component" value="Chromosome"/>
</dbReference>
<dbReference type="GO" id="GO:0005737">
    <property type="term" value="C:cytoplasm"/>
    <property type="evidence" value="ECO:0007669"/>
    <property type="project" value="UniProtKB-SubCell"/>
</dbReference>
<dbReference type="GO" id="GO:0005524">
    <property type="term" value="F:ATP binding"/>
    <property type="evidence" value="ECO:0007669"/>
    <property type="project" value="UniProtKB-KW"/>
</dbReference>
<dbReference type="GO" id="GO:0008817">
    <property type="term" value="F:corrinoid adenosyltransferase activity"/>
    <property type="evidence" value="ECO:0007669"/>
    <property type="project" value="UniProtKB-EC"/>
</dbReference>
<dbReference type="GO" id="GO:0009236">
    <property type="term" value="P:cobalamin biosynthetic process"/>
    <property type="evidence" value="ECO:0000318"/>
    <property type="project" value="GO_Central"/>
</dbReference>
<dbReference type="GO" id="GO:0006779">
    <property type="term" value="P:porphyrin-containing compound biosynthetic process"/>
    <property type="evidence" value="ECO:0007669"/>
    <property type="project" value="UniProtKB-KW"/>
</dbReference>
<dbReference type="CDD" id="cd00561">
    <property type="entry name" value="CobA_ACA"/>
    <property type="match status" value="1"/>
</dbReference>
<dbReference type="FunFam" id="3.40.50.300:FF:000937">
    <property type="entry name" value="Corrinoid adenosyltransferase"/>
    <property type="match status" value="1"/>
</dbReference>
<dbReference type="Gene3D" id="3.40.50.300">
    <property type="entry name" value="P-loop containing nucleotide triphosphate hydrolases"/>
    <property type="match status" value="1"/>
</dbReference>
<dbReference type="InterPro" id="IPR003724">
    <property type="entry name" value="CblAdoTrfase_CobA"/>
</dbReference>
<dbReference type="InterPro" id="IPR027417">
    <property type="entry name" value="P-loop_NTPase"/>
</dbReference>
<dbReference type="NCBIfam" id="TIGR00708">
    <property type="entry name" value="cobA"/>
    <property type="match status" value="1"/>
</dbReference>
<dbReference type="NCBIfam" id="NF004637">
    <property type="entry name" value="PRK05986.1"/>
    <property type="match status" value="1"/>
</dbReference>
<dbReference type="PANTHER" id="PTHR46638">
    <property type="entry name" value="CORRINOID ADENOSYLTRANSFERASE"/>
    <property type="match status" value="1"/>
</dbReference>
<dbReference type="PANTHER" id="PTHR46638:SF1">
    <property type="entry name" value="CORRINOID ADENOSYLTRANSFERASE"/>
    <property type="match status" value="1"/>
</dbReference>
<dbReference type="Pfam" id="PF02572">
    <property type="entry name" value="CobA_CobO_BtuR"/>
    <property type="match status" value="1"/>
</dbReference>
<dbReference type="PIRSF" id="PIRSF015617">
    <property type="entry name" value="Adensltrnsf_CobA"/>
    <property type="match status" value="1"/>
</dbReference>
<dbReference type="SUPFAM" id="SSF52540">
    <property type="entry name" value="P-loop containing nucleoside triphosphate hydrolases"/>
    <property type="match status" value="1"/>
</dbReference>
<protein>
    <recommendedName>
        <fullName>Corrinoid adenosyltransferase CobA</fullName>
        <ecNumber>2.5.1.17</ecNumber>
    </recommendedName>
    <alternativeName>
        <fullName>Cob(II)alamin adenosyltransferase</fullName>
    </alternativeName>
    <alternativeName>
        <fullName>Cob(II)yrinic acid a,c-diamide adenosyltransferase</fullName>
    </alternativeName>
    <alternativeName>
        <fullName>Cobinamide/cobalamin adenosyltransferase</fullName>
    </alternativeName>
</protein>
<accession>P31570</accession>
<name>BTUR_SALTY</name>
<organism>
    <name type="scientific">Salmonella typhimurium (strain LT2 / SGSC1412 / ATCC 700720)</name>
    <dbReference type="NCBI Taxonomy" id="99287"/>
    <lineage>
        <taxon>Bacteria</taxon>
        <taxon>Pseudomonadati</taxon>
        <taxon>Pseudomonadota</taxon>
        <taxon>Gammaproteobacteria</taxon>
        <taxon>Enterobacterales</taxon>
        <taxon>Enterobacteriaceae</taxon>
        <taxon>Salmonella</taxon>
    </lineage>
</organism>
<gene>
    <name type="primary">btuR</name>
    <name evidence="3" type="synonym">cobA</name>
    <name type="ordered locus">STM1718</name>
</gene>
<sequence length="196" mass="21726">MSDERYQQRQQKVKDRVDARVAQAQEERGIIIVFTGNGKGKTTAAFGTAARAVGHGKNVGVVQFIKGTWPNGERNLLEPHGVEFQVMATGFTWETQNREADTAACMAVWQHGKRMLADPLLDMVVLDELTYMVAYDYLPLEEVISALNARPGHQTVIITGRGCHRDILDLADTVSELRPVKHAFDAGVKAQMGIDY</sequence>
<keyword id="KW-0002">3D-structure</keyword>
<keyword id="KW-0067">ATP-binding</keyword>
<keyword id="KW-0169">Cobalamin biosynthesis</keyword>
<keyword id="KW-0963">Cytoplasm</keyword>
<keyword id="KW-0903">Direct protein sequencing</keyword>
<keyword id="KW-0547">Nucleotide-binding</keyword>
<keyword id="KW-0627">Porphyrin biosynthesis</keyword>
<keyword id="KW-1185">Reference proteome</keyword>
<keyword id="KW-0808">Transferase</keyword>
<comment type="function">
    <text>Required for both de novo synthesis of the corrin ring for the assimilation of exogenous corrinoids. Participates in the adenosylation of a variety of incomplete and complete corrinoids.</text>
</comment>
<comment type="catalytic activity">
    <reaction>
        <text>2 cob(II)yrinate a,c diamide + reduced [electron-transfer flavoprotein] + 2 ATP = 2 adenosylcob(III)yrinate a,c-diamide + 2 triphosphate + oxidized [electron-transfer flavoprotein] + 3 H(+)</text>
        <dbReference type="Rhea" id="RHEA:11528"/>
        <dbReference type="Rhea" id="RHEA-COMP:10685"/>
        <dbReference type="Rhea" id="RHEA-COMP:10686"/>
        <dbReference type="ChEBI" id="CHEBI:15378"/>
        <dbReference type="ChEBI" id="CHEBI:18036"/>
        <dbReference type="ChEBI" id="CHEBI:30616"/>
        <dbReference type="ChEBI" id="CHEBI:57692"/>
        <dbReference type="ChEBI" id="CHEBI:58307"/>
        <dbReference type="ChEBI" id="CHEBI:58503"/>
        <dbReference type="ChEBI" id="CHEBI:58537"/>
        <dbReference type="EC" id="2.5.1.17"/>
    </reaction>
</comment>
<comment type="catalytic activity">
    <reaction>
        <text>2 cob(II)alamin + reduced [electron-transfer flavoprotein] + 2 ATP = 2 adenosylcob(III)alamin + 2 triphosphate + oxidized [electron-transfer flavoprotein] + 3 H(+)</text>
        <dbReference type="Rhea" id="RHEA:28671"/>
        <dbReference type="Rhea" id="RHEA-COMP:10685"/>
        <dbReference type="Rhea" id="RHEA-COMP:10686"/>
        <dbReference type="ChEBI" id="CHEBI:15378"/>
        <dbReference type="ChEBI" id="CHEBI:16304"/>
        <dbReference type="ChEBI" id="CHEBI:18036"/>
        <dbReference type="ChEBI" id="CHEBI:18408"/>
        <dbReference type="ChEBI" id="CHEBI:30616"/>
        <dbReference type="ChEBI" id="CHEBI:57692"/>
        <dbReference type="ChEBI" id="CHEBI:58307"/>
        <dbReference type="EC" id="2.5.1.17"/>
    </reaction>
</comment>
<comment type="pathway">
    <text>Cofactor biosynthesis; adenosylcobalamin biosynthesis; adenosylcobalamin from cob(II)yrinate a,c-diamide: step 2/7.</text>
</comment>
<comment type="subunit">
    <text>Homodimer.</text>
</comment>
<comment type="subcellular location">
    <subcellularLocation>
        <location>Cytoplasm</location>
    </subcellularLocation>
</comment>
<comment type="disruption phenotype">
    <text evidence="2">Mild growth defect on 1,2-propanediol-cyanocobalamin medium; no growth is seen in a double cobA-pduO deletion.</text>
</comment>
<comment type="similarity">
    <text evidence="4">Belongs to the Cob(I)alamin adenosyltransferase family.</text>
</comment>
<evidence type="ECO:0000250" key="1"/>
<evidence type="ECO:0000269" key="2">
    <source>
    </source>
</evidence>
<evidence type="ECO:0000303" key="3">
    <source>
    </source>
</evidence>
<evidence type="ECO:0000305" key="4"/>
<evidence type="ECO:0007829" key="5">
    <source>
        <dbReference type="PDB" id="1G5T"/>
    </source>
</evidence>
<evidence type="ECO:0007829" key="6">
    <source>
        <dbReference type="PDB" id="4HUT"/>
    </source>
</evidence>
<feature type="chain" id="PRO_0000065010" description="Corrinoid adenosyltransferase CobA">
    <location>
        <begin position="1"/>
        <end position="196"/>
    </location>
</feature>
<feature type="binding site" evidence="1">
    <location>
        <begin position="36"/>
        <end position="42"/>
    </location>
    <ligand>
        <name>ATP</name>
        <dbReference type="ChEBI" id="CHEBI:30616"/>
    </ligand>
</feature>
<feature type="helix" evidence="6">
    <location>
        <begin position="7"/>
        <end position="23"/>
    </location>
</feature>
<feature type="strand" evidence="5">
    <location>
        <begin position="31"/>
        <end position="39"/>
    </location>
</feature>
<feature type="helix" evidence="5">
    <location>
        <begin position="41"/>
        <end position="54"/>
    </location>
</feature>
<feature type="strand" evidence="5">
    <location>
        <begin position="59"/>
        <end position="65"/>
    </location>
</feature>
<feature type="helix" evidence="5">
    <location>
        <begin position="72"/>
        <end position="77"/>
    </location>
</feature>
<feature type="helix" evidence="5">
    <location>
        <begin position="78"/>
        <end position="80"/>
    </location>
</feature>
<feature type="strand" evidence="5">
    <location>
        <begin position="83"/>
        <end position="86"/>
    </location>
</feature>
<feature type="helix" evidence="5">
    <location>
        <begin position="95"/>
        <end position="97"/>
    </location>
</feature>
<feature type="helix" evidence="5">
    <location>
        <begin position="98"/>
        <end position="115"/>
    </location>
</feature>
<feature type="strand" evidence="5">
    <location>
        <begin position="122"/>
        <end position="127"/>
    </location>
</feature>
<feature type="helix" evidence="5">
    <location>
        <begin position="129"/>
        <end position="134"/>
    </location>
</feature>
<feature type="helix" evidence="5">
    <location>
        <begin position="140"/>
        <end position="148"/>
    </location>
</feature>
<feature type="strand" evidence="5">
    <location>
        <begin position="155"/>
        <end position="159"/>
    </location>
</feature>
<feature type="helix" evidence="5">
    <location>
        <begin position="165"/>
        <end position="170"/>
    </location>
</feature>
<feature type="strand" evidence="5">
    <location>
        <begin position="172"/>
        <end position="176"/>
    </location>
</feature>
<feature type="helix" evidence="6">
    <location>
        <begin position="183"/>
        <end position="186"/>
    </location>
</feature>
<feature type="turn" evidence="6">
    <location>
        <begin position="192"/>
        <end position="194"/>
    </location>
</feature>